<dbReference type="EMBL" id="CP000849">
    <property type="protein sequence ID" value="ABV79220.1"/>
    <property type="molecule type" value="Genomic_DNA"/>
</dbReference>
<dbReference type="RefSeq" id="WP_011477302.1">
    <property type="nucleotide sequence ID" value="NC_009883.1"/>
</dbReference>
<dbReference type="SMR" id="A8GWJ3"/>
<dbReference type="KEGG" id="rbo:A1I_04385"/>
<dbReference type="HOGENOM" id="CLU_130694_6_2_5"/>
<dbReference type="Gene3D" id="3.30.1200.10">
    <property type="entry name" value="YggU-like"/>
    <property type="match status" value="1"/>
</dbReference>
<dbReference type="HAMAP" id="MF_00634">
    <property type="entry name" value="UPF0235"/>
    <property type="match status" value="1"/>
</dbReference>
<dbReference type="InterPro" id="IPR003746">
    <property type="entry name" value="DUF167"/>
</dbReference>
<dbReference type="InterPro" id="IPR036591">
    <property type="entry name" value="YggU-like_sf"/>
</dbReference>
<dbReference type="NCBIfam" id="TIGR00251">
    <property type="entry name" value="DUF167 family protein"/>
    <property type="match status" value="1"/>
</dbReference>
<dbReference type="NCBIfam" id="NF002419">
    <property type="entry name" value="PRK01530.1"/>
    <property type="match status" value="1"/>
</dbReference>
<dbReference type="Pfam" id="PF02594">
    <property type="entry name" value="DUF167"/>
    <property type="match status" value="1"/>
</dbReference>
<dbReference type="SMART" id="SM01152">
    <property type="entry name" value="DUF167"/>
    <property type="match status" value="1"/>
</dbReference>
<dbReference type="SUPFAM" id="SSF69786">
    <property type="entry name" value="YggU-like"/>
    <property type="match status" value="1"/>
</dbReference>
<accession>A8GWJ3</accession>
<organism>
    <name type="scientific">Rickettsia bellii (strain OSU 85-389)</name>
    <dbReference type="NCBI Taxonomy" id="391896"/>
    <lineage>
        <taxon>Bacteria</taxon>
        <taxon>Pseudomonadati</taxon>
        <taxon>Pseudomonadota</taxon>
        <taxon>Alphaproteobacteria</taxon>
        <taxon>Rickettsiales</taxon>
        <taxon>Rickettsiaceae</taxon>
        <taxon>Rickettsieae</taxon>
        <taxon>Rickettsia</taxon>
        <taxon>belli group</taxon>
    </lineage>
</organism>
<name>Y4385_RICB8</name>
<feature type="chain" id="PRO_1000130705" description="UPF0235 protein A1I_04385">
    <location>
        <begin position="1"/>
        <end position="104"/>
    </location>
</feature>
<sequence length="104" mass="11974">MKFFVYNPLLKTASLNIKVKAAAKSNDIKEFIIINDVLHLKLSIKAHAQQGKANEEIINFLAKEWQLLRSNLEITKGHTNSLKTILIKNIDEEYLNLILKPYIK</sequence>
<comment type="similarity">
    <text evidence="1">Belongs to the UPF0235 family.</text>
</comment>
<protein>
    <recommendedName>
        <fullName evidence="1">UPF0235 protein A1I_04385</fullName>
    </recommendedName>
</protein>
<evidence type="ECO:0000255" key="1">
    <source>
        <dbReference type="HAMAP-Rule" id="MF_00634"/>
    </source>
</evidence>
<reference key="1">
    <citation type="submission" date="2007-09" db="EMBL/GenBank/DDBJ databases">
        <title>Complete genome sequencing of Rickettsia bellii.</title>
        <authorList>
            <person name="Madan A."/>
            <person name="Lee H."/>
            <person name="Madan A."/>
            <person name="Yoon J.-G."/>
            <person name="Ryu G.-Y."/>
            <person name="Dasch G."/>
            <person name="Ereemeva M."/>
        </authorList>
    </citation>
    <scope>NUCLEOTIDE SEQUENCE [LARGE SCALE GENOMIC DNA]</scope>
    <source>
        <strain>OSU 85-389</strain>
    </source>
</reference>
<proteinExistence type="inferred from homology"/>
<gene>
    <name type="ordered locus">A1I_04385</name>
</gene>